<keyword id="KW-0369">Histidine metabolism</keyword>
<keyword id="KW-0378">Hydrolase</keyword>
<keyword id="KW-0464">Manganese</keyword>
<keyword id="KW-0479">Metal-binding</keyword>
<accession>Q57RG9</accession>
<sequence length="313" mass="34463">MTQWYPASPALWQGRDDSIEAPDARRLFQTVTRSETFFPENWQQKIALMGFACDEGVKRNSGRPGAAGAPDALRKALANMASHQGHERLVDLGNWVAPTPDLEGAQQALRDAVSRCLRAGMRTLVLGGGHETAFGHGAGVLDAFAQESVGIINLDAHLDLRQTDRATSGTPFRQLAQLCDAQSRAFHYACFGVSRAANTQALWREAQWRNVTVVEDLDCHDALAQMTQFIDKVDKIYLTIDLDVLPVWEMPAVSAPAALGVPLIQVLRLIEPVCRSGKLQAADLVEFNPRFDEDGAAARVAARLGWQIAHWWR</sequence>
<name>HUTG_SALCH</name>
<gene>
    <name evidence="1" type="primary">hutG</name>
    <name type="ordered locus">SCH_0786</name>
</gene>
<organism>
    <name type="scientific">Salmonella choleraesuis (strain SC-B67)</name>
    <dbReference type="NCBI Taxonomy" id="321314"/>
    <lineage>
        <taxon>Bacteria</taxon>
        <taxon>Pseudomonadati</taxon>
        <taxon>Pseudomonadota</taxon>
        <taxon>Gammaproteobacteria</taxon>
        <taxon>Enterobacterales</taxon>
        <taxon>Enterobacteriaceae</taxon>
        <taxon>Salmonella</taxon>
    </lineage>
</organism>
<feature type="chain" id="PRO_0000258259" description="Formimidoylglutamase">
    <location>
        <begin position="1"/>
        <end position="313"/>
    </location>
</feature>
<feature type="binding site" evidence="1">
    <location>
        <position position="130"/>
    </location>
    <ligand>
        <name>Mn(2+)</name>
        <dbReference type="ChEBI" id="CHEBI:29035"/>
        <label>1</label>
    </ligand>
</feature>
<feature type="binding site" evidence="1">
    <location>
        <position position="155"/>
    </location>
    <ligand>
        <name>Mn(2+)</name>
        <dbReference type="ChEBI" id="CHEBI:29035"/>
        <label>1</label>
    </ligand>
</feature>
<feature type="binding site" evidence="1">
    <location>
        <position position="155"/>
    </location>
    <ligand>
        <name>Mn(2+)</name>
        <dbReference type="ChEBI" id="CHEBI:29035"/>
        <label>2</label>
    </ligand>
</feature>
<feature type="binding site" evidence="1">
    <location>
        <position position="157"/>
    </location>
    <ligand>
        <name>Mn(2+)</name>
        <dbReference type="ChEBI" id="CHEBI:29035"/>
        <label>2</label>
    </ligand>
</feature>
<feature type="binding site" evidence="1">
    <location>
        <position position="159"/>
    </location>
    <ligand>
        <name>Mn(2+)</name>
        <dbReference type="ChEBI" id="CHEBI:29035"/>
        <label>1</label>
    </ligand>
</feature>
<feature type="binding site" evidence="1">
    <location>
        <position position="241"/>
    </location>
    <ligand>
        <name>Mn(2+)</name>
        <dbReference type="ChEBI" id="CHEBI:29035"/>
        <label>1</label>
    </ligand>
</feature>
<feature type="binding site" evidence="1">
    <location>
        <position position="241"/>
    </location>
    <ligand>
        <name>Mn(2+)</name>
        <dbReference type="ChEBI" id="CHEBI:29035"/>
        <label>2</label>
    </ligand>
</feature>
<feature type="binding site" evidence="1">
    <location>
        <position position="243"/>
    </location>
    <ligand>
        <name>Mn(2+)</name>
        <dbReference type="ChEBI" id="CHEBI:29035"/>
        <label>2</label>
    </ligand>
</feature>
<proteinExistence type="inferred from homology"/>
<protein>
    <recommendedName>
        <fullName evidence="1">Formimidoylglutamase</fullName>
        <ecNumber evidence="1">3.5.3.8</ecNumber>
    </recommendedName>
    <alternativeName>
        <fullName evidence="1">Formiminoglutamase</fullName>
    </alternativeName>
    <alternativeName>
        <fullName evidence="1">Formiminoglutamate hydrolase</fullName>
    </alternativeName>
</protein>
<reference key="1">
    <citation type="journal article" date="2005" name="Nucleic Acids Res.">
        <title>The genome sequence of Salmonella enterica serovar Choleraesuis, a highly invasive and resistant zoonotic pathogen.</title>
        <authorList>
            <person name="Chiu C.-H."/>
            <person name="Tang P."/>
            <person name="Chu C."/>
            <person name="Hu S."/>
            <person name="Bao Q."/>
            <person name="Yu J."/>
            <person name="Chou Y.-Y."/>
            <person name="Wang H.-S."/>
            <person name="Lee Y.-S."/>
        </authorList>
    </citation>
    <scope>NUCLEOTIDE SEQUENCE [LARGE SCALE GENOMIC DNA]</scope>
    <source>
        <strain>SC-B67</strain>
    </source>
</reference>
<evidence type="ECO:0000255" key="1">
    <source>
        <dbReference type="HAMAP-Rule" id="MF_00737"/>
    </source>
</evidence>
<dbReference type="EC" id="3.5.3.8" evidence="1"/>
<dbReference type="EMBL" id="AE017220">
    <property type="protein sequence ID" value="AAX64692.1"/>
    <property type="molecule type" value="Genomic_DNA"/>
</dbReference>
<dbReference type="RefSeq" id="WP_000195678.1">
    <property type="nucleotide sequence ID" value="NC_006905.1"/>
</dbReference>
<dbReference type="SMR" id="Q57RG9"/>
<dbReference type="KEGG" id="sec:SCH_0786"/>
<dbReference type="HOGENOM" id="CLU_039478_2_0_6"/>
<dbReference type="UniPathway" id="UPA00379">
    <property type="reaction ID" value="UER00552"/>
</dbReference>
<dbReference type="Proteomes" id="UP000000538">
    <property type="component" value="Chromosome"/>
</dbReference>
<dbReference type="GO" id="GO:0008783">
    <property type="term" value="F:agmatinase activity"/>
    <property type="evidence" value="ECO:0007669"/>
    <property type="project" value="TreeGrafter"/>
</dbReference>
<dbReference type="GO" id="GO:0050415">
    <property type="term" value="F:formimidoylglutamase activity"/>
    <property type="evidence" value="ECO:0007669"/>
    <property type="project" value="UniProtKB-UniRule"/>
</dbReference>
<dbReference type="GO" id="GO:0030145">
    <property type="term" value="F:manganese ion binding"/>
    <property type="evidence" value="ECO:0007669"/>
    <property type="project" value="UniProtKB-UniRule"/>
</dbReference>
<dbReference type="GO" id="GO:0019556">
    <property type="term" value="P:L-histidine catabolic process to glutamate and formamide"/>
    <property type="evidence" value="ECO:0007669"/>
    <property type="project" value="UniProtKB-UniPathway"/>
</dbReference>
<dbReference type="GO" id="GO:0019557">
    <property type="term" value="P:L-histidine catabolic process to glutamate and formate"/>
    <property type="evidence" value="ECO:0007669"/>
    <property type="project" value="UniProtKB-UniPathway"/>
</dbReference>
<dbReference type="GO" id="GO:0033389">
    <property type="term" value="P:putrescine biosynthetic process from arginine, via agmatine"/>
    <property type="evidence" value="ECO:0007669"/>
    <property type="project" value="TreeGrafter"/>
</dbReference>
<dbReference type="CDD" id="cd09988">
    <property type="entry name" value="Formimidoylglutamase"/>
    <property type="match status" value="1"/>
</dbReference>
<dbReference type="FunFam" id="3.40.800.10:FF:000010">
    <property type="entry name" value="Formimidoylglutamase"/>
    <property type="match status" value="1"/>
</dbReference>
<dbReference type="Gene3D" id="3.40.800.10">
    <property type="entry name" value="Ureohydrolase domain"/>
    <property type="match status" value="1"/>
</dbReference>
<dbReference type="HAMAP" id="MF_00737">
    <property type="entry name" value="Formimidoylglutam"/>
    <property type="match status" value="1"/>
</dbReference>
<dbReference type="InterPro" id="IPR005923">
    <property type="entry name" value="HutG"/>
</dbReference>
<dbReference type="InterPro" id="IPR006035">
    <property type="entry name" value="Ureohydrolase"/>
</dbReference>
<dbReference type="InterPro" id="IPR023696">
    <property type="entry name" value="Ureohydrolase_dom_sf"/>
</dbReference>
<dbReference type="NCBIfam" id="TIGR01227">
    <property type="entry name" value="hutG"/>
    <property type="match status" value="1"/>
</dbReference>
<dbReference type="PANTHER" id="PTHR11358">
    <property type="entry name" value="ARGINASE/AGMATINASE"/>
    <property type="match status" value="1"/>
</dbReference>
<dbReference type="PANTHER" id="PTHR11358:SF35">
    <property type="entry name" value="FORMIMIDOYLGLUTAMASE"/>
    <property type="match status" value="1"/>
</dbReference>
<dbReference type="Pfam" id="PF00491">
    <property type="entry name" value="Arginase"/>
    <property type="match status" value="1"/>
</dbReference>
<dbReference type="PIRSF" id="PIRSF036979">
    <property type="entry name" value="Arginase"/>
    <property type="match status" value="1"/>
</dbReference>
<dbReference type="SUPFAM" id="SSF52768">
    <property type="entry name" value="Arginase/deacetylase"/>
    <property type="match status" value="1"/>
</dbReference>
<dbReference type="PROSITE" id="PS51409">
    <property type="entry name" value="ARGINASE_2"/>
    <property type="match status" value="1"/>
</dbReference>
<comment type="function">
    <text evidence="1">Catalyzes the conversion of N-formimidoyl-L-glutamate to L-glutamate and formamide.</text>
</comment>
<comment type="catalytic activity">
    <reaction evidence="1">
        <text>N-formimidoyl-L-glutamate + H2O = formamide + L-glutamate</text>
        <dbReference type="Rhea" id="RHEA:22492"/>
        <dbReference type="ChEBI" id="CHEBI:15377"/>
        <dbReference type="ChEBI" id="CHEBI:16397"/>
        <dbReference type="ChEBI" id="CHEBI:29985"/>
        <dbReference type="ChEBI" id="CHEBI:58928"/>
        <dbReference type="EC" id="3.5.3.8"/>
    </reaction>
</comment>
<comment type="cofactor">
    <cofactor evidence="1">
        <name>Mn(2+)</name>
        <dbReference type="ChEBI" id="CHEBI:29035"/>
    </cofactor>
    <text evidence="1">Binds 2 manganese ions per subunit.</text>
</comment>
<comment type="pathway">
    <text evidence="1">Amino-acid degradation; L-histidine degradation into L-glutamate; L-glutamate from N-formimidoyl-L-glutamate (hydrolase route): step 1/1.</text>
</comment>
<comment type="similarity">
    <text evidence="1">Belongs to the arginase family.</text>
</comment>